<sequence>MMITLRKLPLAVAVAAGVMSAQAMAVDFHGYARSGIGWTGSGGEQQCFQTTGAQSKYRLGNECETYAELKLGQEVWKEGDKSFYFDTNVAYSVAQQNDWEATDPAFREANVQGKNLIEWLPGSTIWAGKRFYQRHDVHMIDFYYWDISGPGAGLENIDVGFGKLSLAATRSSEAGGSSSFASNNIYDYTNETANDVFDVRLAQMEINPGGTLELGVDYGRANLRDNYRLVDGASKDGWLFTAEHTQSVLKGFNKFVVQYATDSMTSQGKGLSQGSGVAFDNEKFAYNINNNGHMLRILDHGAISMGDNWDMMYVGMYQDINWDNDNGTKWWTVGIRPMYKWTPIMSTVMEIGYDNVESQRTGDKNNQYKITLAQQWQAGDSIWSRPAIRVFATYAKWDEKWGYDYNGDSKVNPNYGKAVPADFNGGSFGRGDSDEWTFGAQMEIWW</sequence>
<protein>
    <recommendedName>
        <fullName evidence="1">Maltoporin</fullName>
    </recommendedName>
    <alternativeName>
        <fullName evidence="1">Maltose-inducible porin</fullName>
    </alternativeName>
</protein>
<evidence type="ECO:0000255" key="1">
    <source>
        <dbReference type="HAMAP-Rule" id="MF_01301"/>
    </source>
</evidence>
<accession>B7NFY0</accession>
<reference key="1">
    <citation type="journal article" date="2009" name="PLoS Genet.">
        <title>Organised genome dynamics in the Escherichia coli species results in highly diverse adaptive paths.</title>
        <authorList>
            <person name="Touchon M."/>
            <person name="Hoede C."/>
            <person name="Tenaillon O."/>
            <person name="Barbe V."/>
            <person name="Baeriswyl S."/>
            <person name="Bidet P."/>
            <person name="Bingen E."/>
            <person name="Bonacorsi S."/>
            <person name="Bouchier C."/>
            <person name="Bouvet O."/>
            <person name="Calteau A."/>
            <person name="Chiapello H."/>
            <person name="Clermont O."/>
            <person name="Cruveiller S."/>
            <person name="Danchin A."/>
            <person name="Diard M."/>
            <person name="Dossat C."/>
            <person name="Karoui M.E."/>
            <person name="Frapy E."/>
            <person name="Garry L."/>
            <person name="Ghigo J.M."/>
            <person name="Gilles A.M."/>
            <person name="Johnson J."/>
            <person name="Le Bouguenec C."/>
            <person name="Lescat M."/>
            <person name="Mangenot S."/>
            <person name="Martinez-Jehanne V."/>
            <person name="Matic I."/>
            <person name="Nassif X."/>
            <person name="Oztas S."/>
            <person name="Petit M.A."/>
            <person name="Pichon C."/>
            <person name="Rouy Z."/>
            <person name="Ruf C.S."/>
            <person name="Schneider D."/>
            <person name="Tourret J."/>
            <person name="Vacherie B."/>
            <person name="Vallenet D."/>
            <person name="Medigue C."/>
            <person name="Rocha E.P.C."/>
            <person name="Denamur E."/>
        </authorList>
    </citation>
    <scope>NUCLEOTIDE SEQUENCE [LARGE SCALE GENOMIC DNA]</scope>
    <source>
        <strain>UMN026 / ExPEC</strain>
    </source>
</reference>
<keyword id="KW-0998">Cell outer membrane</keyword>
<keyword id="KW-0406">Ion transport</keyword>
<keyword id="KW-0472">Membrane</keyword>
<keyword id="KW-0626">Porin</keyword>
<keyword id="KW-0732">Signal</keyword>
<keyword id="KW-0762">Sugar transport</keyword>
<keyword id="KW-0812">Transmembrane</keyword>
<keyword id="KW-1134">Transmembrane beta strand</keyword>
<keyword id="KW-0813">Transport</keyword>
<feature type="signal peptide" evidence="1">
    <location>
        <begin position="1"/>
        <end position="25"/>
    </location>
</feature>
<feature type="chain" id="PRO_1000140485" description="Maltoporin">
    <location>
        <begin position="26"/>
        <end position="446"/>
    </location>
</feature>
<feature type="site" description="Greasy slide, important in sugar transport" evidence="1">
    <location>
        <position position="31"/>
    </location>
</feature>
<feature type="site" description="Greasy slide, important in sugar transport" evidence="1">
    <location>
        <position position="66"/>
    </location>
</feature>
<feature type="site" description="Greasy slide, important in sugar transport" evidence="1">
    <location>
        <position position="99"/>
    </location>
</feature>
<feature type="site" description="Important in sugar transport" evidence="1">
    <location>
        <position position="143"/>
    </location>
</feature>
<feature type="site" description="Greasy slide, important in sugar transport" evidence="1">
    <location>
        <position position="252"/>
    </location>
</feature>
<feature type="site" description="Greasy slide, important in sugar transport" evidence="1">
    <location>
        <position position="383"/>
    </location>
</feature>
<feature type="site" description="Greasy slide, important in sugar transport" evidence="1">
    <location>
        <position position="445"/>
    </location>
</feature>
<dbReference type="EMBL" id="CU928163">
    <property type="protein sequence ID" value="CAR15687.1"/>
    <property type="molecule type" value="Genomic_DNA"/>
</dbReference>
<dbReference type="RefSeq" id="WP_000973658.1">
    <property type="nucleotide sequence ID" value="NC_011751.1"/>
</dbReference>
<dbReference type="RefSeq" id="YP_002415177.1">
    <property type="nucleotide sequence ID" value="NC_011751.1"/>
</dbReference>
<dbReference type="SMR" id="B7NFY0"/>
<dbReference type="STRING" id="585056.ECUMN_4570"/>
<dbReference type="GeneID" id="93777799"/>
<dbReference type="KEGG" id="eum:ECUMN_4570"/>
<dbReference type="PATRIC" id="fig|585056.7.peg.4733"/>
<dbReference type="HOGENOM" id="CLU_032473_4_1_6"/>
<dbReference type="Proteomes" id="UP000007097">
    <property type="component" value="Chromosome"/>
</dbReference>
<dbReference type="GO" id="GO:0009279">
    <property type="term" value="C:cell outer membrane"/>
    <property type="evidence" value="ECO:0007669"/>
    <property type="project" value="UniProtKB-SubCell"/>
</dbReference>
<dbReference type="GO" id="GO:0046930">
    <property type="term" value="C:pore complex"/>
    <property type="evidence" value="ECO:0007669"/>
    <property type="project" value="UniProtKB-KW"/>
</dbReference>
<dbReference type="GO" id="GO:0042958">
    <property type="term" value="F:maltodextrin transmembrane transporter activity"/>
    <property type="evidence" value="ECO:0007669"/>
    <property type="project" value="InterPro"/>
</dbReference>
<dbReference type="GO" id="GO:0015481">
    <property type="term" value="F:maltose transporting porin activity"/>
    <property type="evidence" value="ECO:0007669"/>
    <property type="project" value="InterPro"/>
</dbReference>
<dbReference type="GO" id="GO:0006811">
    <property type="term" value="P:monoatomic ion transport"/>
    <property type="evidence" value="ECO:0007669"/>
    <property type="project" value="UniProtKB-KW"/>
</dbReference>
<dbReference type="CDD" id="cd01346">
    <property type="entry name" value="Maltoporin-like"/>
    <property type="match status" value="1"/>
</dbReference>
<dbReference type="FunFam" id="2.40.170.10:FF:000001">
    <property type="entry name" value="Maltoporin"/>
    <property type="match status" value="1"/>
</dbReference>
<dbReference type="Gene3D" id="2.40.170.10">
    <property type="entry name" value="Porin, LamB type"/>
    <property type="match status" value="1"/>
</dbReference>
<dbReference type="HAMAP" id="MF_01301">
    <property type="entry name" value="LamB"/>
    <property type="match status" value="1"/>
</dbReference>
<dbReference type="InterPro" id="IPR050286">
    <property type="entry name" value="G_neg_Bact_CarbUptk_Porin"/>
</dbReference>
<dbReference type="InterPro" id="IPR023738">
    <property type="entry name" value="Maltoporin"/>
</dbReference>
<dbReference type="InterPro" id="IPR003192">
    <property type="entry name" value="Porin_LamB"/>
</dbReference>
<dbReference type="InterPro" id="IPR036998">
    <property type="entry name" value="Porin_LamB_sf"/>
</dbReference>
<dbReference type="NCBIfam" id="NF006860">
    <property type="entry name" value="PRK09360.1"/>
    <property type="match status" value="1"/>
</dbReference>
<dbReference type="PANTHER" id="PTHR38762">
    <property type="entry name" value="CRYPTIC OUTER MEMBRANE PORIN BGLH-RELATED"/>
    <property type="match status" value="1"/>
</dbReference>
<dbReference type="PANTHER" id="PTHR38762:SF1">
    <property type="entry name" value="CRYPTIC OUTER MEMBRANE PORIN BGLH-RELATED"/>
    <property type="match status" value="1"/>
</dbReference>
<dbReference type="Pfam" id="PF02264">
    <property type="entry name" value="LamB"/>
    <property type="match status" value="1"/>
</dbReference>
<dbReference type="SUPFAM" id="SSF56935">
    <property type="entry name" value="Porins"/>
    <property type="match status" value="1"/>
</dbReference>
<gene>
    <name evidence="1" type="primary">lamB</name>
    <name type="ordered locus">ECUMN_4570</name>
</gene>
<name>LAMB_ECOLU</name>
<proteinExistence type="inferred from homology"/>
<comment type="function">
    <text evidence="1">Involved in the transport of maltose and maltodextrins.</text>
</comment>
<comment type="catalytic activity">
    <reaction evidence="1">
        <text>beta-maltose(in) = beta-maltose(out)</text>
        <dbReference type="Rhea" id="RHEA:29731"/>
        <dbReference type="ChEBI" id="CHEBI:18147"/>
    </reaction>
</comment>
<comment type="subunit">
    <text evidence="1">Homotrimer formed of three 18-stranded antiparallel beta-barrels, containing three independent channels.</text>
</comment>
<comment type="subcellular location">
    <subcellularLocation>
        <location evidence="1">Cell outer membrane</location>
        <topology evidence="1">Multi-pass membrane protein</topology>
    </subcellularLocation>
</comment>
<comment type="induction">
    <text evidence="1">By maltose.</text>
</comment>
<comment type="similarity">
    <text evidence="1">Belongs to the porin LamB (TC 1.B.3) family.</text>
</comment>
<organism>
    <name type="scientific">Escherichia coli O17:K52:H18 (strain UMN026 / ExPEC)</name>
    <dbReference type="NCBI Taxonomy" id="585056"/>
    <lineage>
        <taxon>Bacteria</taxon>
        <taxon>Pseudomonadati</taxon>
        <taxon>Pseudomonadota</taxon>
        <taxon>Gammaproteobacteria</taxon>
        <taxon>Enterobacterales</taxon>
        <taxon>Enterobacteriaceae</taxon>
        <taxon>Escherichia</taxon>
    </lineage>
</organism>